<sequence>MGKIKELQTSLANKIAAGEVVERPSSVVKELLENAIDAGATEISIEVEESGVQSIRVVDNGSGIEAEDLGLVFHRHATSKLDQDEDLFHIRTLGFRGEALASISSVAKVTLKTCTDNANGNEIYVENGEILNHKPAKAKKGTDILVESLFYNTPARLKYIKSLYTELGKITDIVNRMAMSHPDIRIALISDGKTMLSTNGSGRTNEVMAEIYGMKVARDLVHISGDTSDYHIEGFVAKPEHSRSNKHYISIFINGRYIKNFMLNKAILEGYHTLLTIGRFPICYINIEMDPILVDVNVHPTKLEVRLSKEEQLYQLIVSKIQEAFKDRILIPKNNLDYVPKKNKVLYSFEQQKIEFEQRQNTENNQEKTFSSEESNSKSFMAENQNDEIVIKEDSYNPFVTKTSESLITDDESSGYNNTREKDEDYFKKQQEILQEMDQTFDSNEDASVQNYENKASDDYYDVNDIKGTKSKDPKRRIPYMEIVGQVHGTYIIAQNEFGMYMIDQHAAQERIKYEYFRDKIGEVTNEVQDLLIPLTFHFSKDEQLVIDQYKNELQQVGIMLEHFGGHDYIVSSYPVWFPKDEVEEIIKDMIELILEEKKVDIKKLREDVAIMMSCKKSIKANHYLQKHEMSDLIDQLREAEDPFTCPHGRPIIINFSKYELEKLFKRVM</sequence>
<keyword id="KW-0227">DNA damage</keyword>
<keyword id="KW-0234">DNA repair</keyword>
<name>MUTL_STAA2</name>
<feature type="chain" id="PRO_1000076722" description="DNA mismatch repair protein MutL">
    <location>
        <begin position="1"/>
        <end position="669"/>
    </location>
</feature>
<feature type="region of interest" description="Disordered" evidence="2">
    <location>
        <begin position="357"/>
        <end position="379"/>
    </location>
</feature>
<feature type="compositionally biased region" description="Polar residues" evidence="2">
    <location>
        <begin position="361"/>
        <end position="379"/>
    </location>
</feature>
<organism>
    <name type="scientific">Staphylococcus aureus (strain JH1)</name>
    <dbReference type="NCBI Taxonomy" id="359787"/>
    <lineage>
        <taxon>Bacteria</taxon>
        <taxon>Bacillati</taxon>
        <taxon>Bacillota</taxon>
        <taxon>Bacilli</taxon>
        <taxon>Bacillales</taxon>
        <taxon>Staphylococcaceae</taxon>
        <taxon>Staphylococcus</taxon>
    </lineage>
</organism>
<evidence type="ECO:0000255" key="1">
    <source>
        <dbReference type="HAMAP-Rule" id="MF_00149"/>
    </source>
</evidence>
<evidence type="ECO:0000256" key="2">
    <source>
        <dbReference type="SAM" id="MobiDB-lite"/>
    </source>
</evidence>
<dbReference type="EMBL" id="CP000736">
    <property type="protein sequence ID" value="ABR52233.1"/>
    <property type="molecule type" value="Genomic_DNA"/>
</dbReference>
<dbReference type="SMR" id="A6U1B5"/>
<dbReference type="KEGG" id="sah:SaurJH1_1382"/>
<dbReference type="HOGENOM" id="CLU_004131_4_1_9"/>
<dbReference type="GO" id="GO:0032300">
    <property type="term" value="C:mismatch repair complex"/>
    <property type="evidence" value="ECO:0007669"/>
    <property type="project" value="InterPro"/>
</dbReference>
<dbReference type="GO" id="GO:0005524">
    <property type="term" value="F:ATP binding"/>
    <property type="evidence" value="ECO:0007669"/>
    <property type="project" value="InterPro"/>
</dbReference>
<dbReference type="GO" id="GO:0016887">
    <property type="term" value="F:ATP hydrolysis activity"/>
    <property type="evidence" value="ECO:0007669"/>
    <property type="project" value="InterPro"/>
</dbReference>
<dbReference type="GO" id="GO:0140664">
    <property type="term" value="F:ATP-dependent DNA damage sensor activity"/>
    <property type="evidence" value="ECO:0007669"/>
    <property type="project" value="InterPro"/>
</dbReference>
<dbReference type="GO" id="GO:0030983">
    <property type="term" value="F:mismatched DNA binding"/>
    <property type="evidence" value="ECO:0007669"/>
    <property type="project" value="InterPro"/>
</dbReference>
<dbReference type="GO" id="GO:0006298">
    <property type="term" value="P:mismatch repair"/>
    <property type="evidence" value="ECO:0007669"/>
    <property type="project" value="UniProtKB-UniRule"/>
</dbReference>
<dbReference type="CDD" id="cd16926">
    <property type="entry name" value="HATPase_MutL-MLH-PMS-like"/>
    <property type="match status" value="1"/>
</dbReference>
<dbReference type="CDD" id="cd00782">
    <property type="entry name" value="MutL_Trans"/>
    <property type="match status" value="1"/>
</dbReference>
<dbReference type="FunFam" id="3.30.1370.100:FF:000004">
    <property type="entry name" value="DNA mismatch repair endonuclease MutL"/>
    <property type="match status" value="1"/>
</dbReference>
<dbReference type="FunFam" id="3.30.230.10:FF:000036">
    <property type="entry name" value="DNA mismatch repair endonuclease MutL"/>
    <property type="match status" value="1"/>
</dbReference>
<dbReference type="FunFam" id="3.30.565.10:FF:000003">
    <property type="entry name" value="DNA mismatch repair endonuclease MutL"/>
    <property type="match status" value="1"/>
</dbReference>
<dbReference type="Gene3D" id="3.30.230.10">
    <property type="match status" value="1"/>
</dbReference>
<dbReference type="Gene3D" id="3.30.565.10">
    <property type="entry name" value="Histidine kinase-like ATPase, C-terminal domain"/>
    <property type="match status" value="1"/>
</dbReference>
<dbReference type="Gene3D" id="3.30.1540.20">
    <property type="entry name" value="MutL, C-terminal domain, dimerisation subdomain"/>
    <property type="match status" value="1"/>
</dbReference>
<dbReference type="Gene3D" id="3.30.1370.100">
    <property type="entry name" value="MutL, C-terminal domain, regulatory subdomain"/>
    <property type="match status" value="1"/>
</dbReference>
<dbReference type="HAMAP" id="MF_00149">
    <property type="entry name" value="DNA_mis_repair"/>
    <property type="match status" value="1"/>
</dbReference>
<dbReference type="InterPro" id="IPR014762">
    <property type="entry name" value="DNA_mismatch_repair_CS"/>
</dbReference>
<dbReference type="InterPro" id="IPR020667">
    <property type="entry name" value="DNA_mismatch_repair_MutL"/>
</dbReference>
<dbReference type="InterPro" id="IPR013507">
    <property type="entry name" value="DNA_mismatch_S5_2-like"/>
</dbReference>
<dbReference type="InterPro" id="IPR036890">
    <property type="entry name" value="HATPase_C_sf"/>
</dbReference>
<dbReference type="InterPro" id="IPR002099">
    <property type="entry name" value="MutL/Mlh/PMS"/>
</dbReference>
<dbReference type="InterPro" id="IPR038973">
    <property type="entry name" value="MutL/Mlh/Pms-like"/>
</dbReference>
<dbReference type="InterPro" id="IPR014790">
    <property type="entry name" value="MutL_C"/>
</dbReference>
<dbReference type="InterPro" id="IPR042120">
    <property type="entry name" value="MutL_C_dimsub"/>
</dbReference>
<dbReference type="InterPro" id="IPR042121">
    <property type="entry name" value="MutL_C_regsub"/>
</dbReference>
<dbReference type="InterPro" id="IPR037198">
    <property type="entry name" value="MutL_C_sf"/>
</dbReference>
<dbReference type="InterPro" id="IPR020568">
    <property type="entry name" value="Ribosomal_Su5_D2-typ_SF"/>
</dbReference>
<dbReference type="InterPro" id="IPR014721">
    <property type="entry name" value="Ribsml_uS5_D2-typ_fold_subgr"/>
</dbReference>
<dbReference type="NCBIfam" id="TIGR00585">
    <property type="entry name" value="mutl"/>
    <property type="match status" value="1"/>
</dbReference>
<dbReference type="NCBIfam" id="NF000950">
    <property type="entry name" value="PRK00095.1-3"/>
    <property type="match status" value="1"/>
</dbReference>
<dbReference type="PANTHER" id="PTHR10073">
    <property type="entry name" value="DNA MISMATCH REPAIR PROTEIN MLH, PMS, MUTL"/>
    <property type="match status" value="1"/>
</dbReference>
<dbReference type="PANTHER" id="PTHR10073:SF12">
    <property type="entry name" value="DNA MISMATCH REPAIR PROTEIN MLH1"/>
    <property type="match status" value="1"/>
</dbReference>
<dbReference type="Pfam" id="PF01119">
    <property type="entry name" value="DNA_mis_repair"/>
    <property type="match status" value="1"/>
</dbReference>
<dbReference type="Pfam" id="PF13589">
    <property type="entry name" value="HATPase_c_3"/>
    <property type="match status" value="1"/>
</dbReference>
<dbReference type="Pfam" id="PF08676">
    <property type="entry name" value="MutL_C"/>
    <property type="match status" value="1"/>
</dbReference>
<dbReference type="SMART" id="SM01340">
    <property type="entry name" value="DNA_mis_repair"/>
    <property type="match status" value="1"/>
</dbReference>
<dbReference type="SMART" id="SM00853">
    <property type="entry name" value="MutL_C"/>
    <property type="match status" value="1"/>
</dbReference>
<dbReference type="SUPFAM" id="SSF55874">
    <property type="entry name" value="ATPase domain of HSP90 chaperone/DNA topoisomerase II/histidine kinase"/>
    <property type="match status" value="1"/>
</dbReference>
<dbReference type="SUPFAM" id="SSF118116">
    <property type="entry name" value="DNA mismatch repair protein MutL"/>
    <property type="match status" value="1"/>
</dbReference>
<dbReference type="SUPFAM" id="SSF54211">
    <property type="entry name" value="Ribosomal protein S5 domain 2-like"/>
    <property type="match status" value="1"/>
</dbReference>
<dbReference type="PROSITE" id="PS00058">
    <property type="entry name" value="DNA_MISMATCH_REPAIR_1"/>
    <property type="match status" value="1"/>
</dbReference>
<comment type="function">
    <text evidence="1">This protein is involved in the repair of mismatches in DNA. It is required for dam-dependent methyl-directed DNA mismatch repair. May act as a 'molecular matchmaker', a protein that promotes the formation of a stable complex between two or more DNA-binding proteins in an ATP-dependent manner without itself being part of a final effector complex.</text>
</comment>
<comment type="similarity">
    <text evidence="1">Belongs to the DNA mismatch repair MutL/HexB family.</text>
</comment>
<proteinExistence type="inferred from homology"/>
<gene>
    <name evidence="1" type="primary">mutL</name>
    <name type="ordered locus">SaurJH1_1382</name>
</gene>
<accession>A6U1B5</accession>
<reference key="1">
    <citation type="submission" date="2007-06" db="EMBL/GenBank/DDBJ databases">
        <title>Complete sequence of chromosome of Staphylococcus aureus subsp. aureus JH1.</title>
        <authorList>
            <consortium name="US DOE Joint Genome Institute"/>
            <person name="Copeland A."/>
            <person name="Lucas S."/>
            <person name="Lapidus A."/>
            <person name="Barry K."/>
            <person name="Detter J.C."/>
            <person name="Glavina del Rio T."/>
            <person name="Hammon N."/>
            <person name="Israni S."/>
            <person name="Dalin E."/>
            <person name="Tice H."/>
            <person name="Pitluck S."/>
            <person name="Chain P."/>
            <person name="Malfatti S."/>
            <person name="Shin M."/>
            <person name="Vergez L."/>
            <person name="Schmutz J."/>
            <person name="Larimer F."/>
            <person name="Land M."/>
            <person name="Hauser L."/>
            <person name="Kyrpides N."/>
            <person name="Ivanova N."/>
            <person name="Tomasz A."/>
            <person name="Richardson P."/>
        </authorList>
    </citation>
    <scope>NUCLEOTIDE SEQUENCE [LARGE SCALE GENOMIC DNA]</scope>
    <source>
        <strain>JH1</strain>
    </source>
</reference>
<protein>
    <recommendedName>
        <fullName evidence="1">DNA mismatch repair protein MutL</fullName>
    </recommendedName>
</protein>